<protein>
    <recommendedName>
        <fullName>Solute carrier family 25 member 47</fullName>
    </recommendedName>
    <alternativeName>
        <fullName>Hepatocellular carcinoma down-regulated mitochondrial carrier homolog</fullName>
    </alternativeName>
    <alternativeName>
        <fullName evidence="1">Mitochondrial NAD(+) transporter SLC25A47</fullName>
    </alternativeName>
</protein>
<sequence length="310" mass="33618">MDFVAGAIGGVCGVAVGYPLDTVKVKIQTEAKYTSIWHCVRDTYRQERLWGFYRGLSLPVCTVSLVSSVSFGTYHHCLAHICRFRYGSTDVKPTKADITLSGCASGLVRVFLTSPTEVAKVRLQTQAQSQTQQRRPSASWTSVAPALCPAPTACLEPRPKYSGPLHCLVTVAREEGLRGLYKGSSALLLREGHSFATYFLSYAVLSEWLTPAGQSQPDVLGVLVAGGCAGVLAWAVATPMDVIKSRLQADGQGQQRYRGLLHCVVTSVREEGPRVLFKGLALNCCRAFPVNMVVFVAYEAVLRLTQGLLT</sequence>
<name>S2547_RAT</name>
<gene>
    <name evidence="1 4" type="primary">Slc25a47</name>
    <name type="synonym">Hdmcp</name>
</gene>
<keyword id="KW-0472">Membrane</keyword>
<keyword id="KW-0496">Mitochondrion</keyword>
<keyword id="KW-0999">Mitochondrion inner membrane</keyword>
<keyword id="KW-1000">Mitochondrion outer membrane</keyword>
<keyword id="KW-1185">Reference proteome</keyword>
<keyword id="KW-0677">Repeat</keyword>
<keyword id="KW-0812">Transmembrane</keyword>
<keyword id="KW-1133">Transmembrane helix</keyword>
<keyword id="KW-0813">Transport</keyword>
<feature type="chain" id="PRO_0000291781" description="Solute carrier family 25 member 47">
    <location>
        <begin position="1"/>
        <end position="310"/>
    </location>
</feature>
<feature type="transmembrane region" description="Helical; Name=1" evidence="2">
    <location>
        <begin position="3"/>
        <end position="23"/>
    </location>
</feature>
<feature type="transmembrane region" description="Helical; Name=2" evidence="2">
    <location>
        <begin position="49"/>
        <end position="69"/>
    </location>
</feature>
<feature type="transmembrane region" description="Helical; Name=3" evidence="2">
    <location>
        <begin position="98"/>
        <end position="116"/>
    </location>
</feature>
<feature type="transmembrane region" description="Helical; Name=4" evidence="2">
    <location>
        <begin position="192"/>
        <end position="212"/>
    </location>
</feature>
<feature type="transmembrane region" description="Helical; Name=5" evidence="2">
    <location>
        <begin position="219"/>
        <end position="239"/>
    </location>
</feature>
<feature type="transmembrane region" description="Helical; Name=6" evidence="2">
    <location>
        <begin position="275"/>
        <end position="295"/>
    </location>
</feature>
<feature type="repeat" description="Solcar 1">
    <location>
        <begin position="1"/>
        <end position="80"/>
    </location>
</feature>
<feature type="repeat" description="Solcar 2">
    <location>
        <begin position="93"/>
        <end position="208"/>
    </location>
</feature>
<feature type="repeat" description="Solcar 3">
    <location>
        <begin position="217"/>
        <end position="304"/>
    </location>
</feature>
<evidence type="ECO:0000250" key="1">
    <source>
        <dbReference type="UniProtKB" id="Q6IS41"/>
    </source>
</evidence>
<evidence type="ECO:0000255" key="2"/>
<evidence type="ECO:0000305" key="3"/>
<evidence type="ECO:0000312" key="4">
    <source>
        <dbReference type="RGD" id="1303247"/>
    </source>
</evidence>
<organism>
    <name type="scientific">Rattus norvegicus</name>
    <name type="common">Rat</name>
    <dbReference type="NCBI Taxonomy" id="10116"/>
    <lineage>
        <taxon>Eukaryota</taxon>
        <taxon>Metazoa</taxon>
        <taxon>Chordata</taxon>
        <taxon>Craniata</taxon>
        <taxon>Vertebrata</taxon>
        <taxon>Euteleostomi</taxon>
        <taxon>Mammalia</taxon>
        <taxon>Eutheria</taxon>
        <taxon>Euarchontoglires</taxon>
        <taxon>Glires</taxon>
        <taxon>Rodentia</taxon>
        <taxon>Myomorpha</taxon>
        <taxon>Muroidea</taxon>
        <taxon>Muridae</taxon>
        <taxon>Murinae</taxon>
        <taxon>Rattus</taxon>
    </lineage>
</organism>
<comment type="function">
    <text evidence="1">Mitochondrial NAD(+) transporter that acts as a 'metabolic gate' in hepatic lipogenesis. Provides NAD(+) substrate to mitochondrial SIRT3 deacetylase and enables its NAD(+)-dependent activities in mitochondrial energy metabolism. This triggers downstream activation of PRKAA1/AMPK-alpha signaling cascade that negatively regulates sterol regulatory element-binding protein (SREBP) transcriptional activities and ATP-consuming lipogenesis to restore cellular energy balance. May transport other mitochondrial metabolites having an aromatic nucleotide and phosphate groups, such as acetyl-CoA. Does not transport amino acids. The transport mechanism remains to be elucidated.</text>
</comment>
<comment type="catalytic activity">
    <reaction evidence="1">
        <text>NAD(+)(in) = NAD(+)(out)</text>
        <dbReference type="Rhea" id="RHEA:65408"/>
        <dbReference type="ChEBI" id="CHEBI:57540"/>
    </reaction>
</comment>
<comment type="catalytic activity">
    <reaction evidence="1">
        <text>acetyl-CoA(in) = acetyl-CoA(out)</text>
        <dbReference type="Rhea" id="RHEA:75039"/>
        <dbReference type="ChEBI" id="CHEBI:57288"/>
    </reaction>
</comment>
<comment type="subcellular location">
    <subcellularLocation>
        <location evidence="1">Mitochondrion inner membrane</location>
        <topology evidence="2">Multi-pass membrane protein</topology>
    </subcellularLocation>
    <subcellularLocation>
        <location evidence="1">Mitochondrion outer membrane</location>
        <topology evidence="2">Multi-pass membrane protein</topology>
    </subcellularLocation>
</comment>
<comment type="similarity">
    <text evidence="3">Belongs to the mitochondrial carrier (TC 2.A.29) family.</text>
</comment>
<proteinExistence type="evidence at transcript level"/>
<reference key="1">
    <citation type="journal article" date="2004" name="J. Biol. Chem.">
        <title>Cloning and identification of hepatocellular carcinoma down-regulated mitochondrial carrier protein, a novel liver-specific uncoupling protein.</title>
        <authorList>
            <person name="Tan M.G.K."/>
            <person name="Ooi L.L.P.J."/>
            <person name="Aw S.E."/>
            <person name="Hui K.M."/>
        </authorList>
    </citation>
    <scope>NUCLEOTIDE SEQUENCE [MRNA]</scope>
    <source>
        <strain>Wistar</strain>
    </source>
</reference>
<reference key="2">
    <citation type="journal article" date="2004" name="Genome Res.">
        <title>The status, quality, and expansion of the NIH full-length cDNA project: the Mammalian Gene Collection (MGC).</title>
        <authorList>
            <consortium name="The MGC Project Team"/>
        </authorList>
    </citation>
    <scope>NUCLEOTIDE SEQUENCE [LARGE SCALE MRNA]</scope>
    <source>
        <tissue>Liver</tissue>
    </source>
</reference>
<accession>Q6J329</accession>
<dbReference type="EMBL" id="AY603424">
    <property type="protein sequence ID" value="AAT35561.1"/>
    <property type="molecule type" value="mRNA"/>
</dbReference>
<dbReference type="EMBL" id="BC089874">
    <property type="protein sequence ID" value="AAH89874.1"/>
    <property type="molecule type" value="mRNA"/>
</dbReference>
<dbReference type="RefSeq" id="NP_001001509.1">
    <property type="nucleotide sequence ID" value="NM_001001509.1"/>
</dbReference>
<dbReference type="SMR" id="Q6J329"/>
<dbReference type="STRING" id="10116.ENSRNOP00000004070"/>
<dbReference type="PhosphoSitePlus" id="Q6J329"/>
<dbReference type="PaxDb" id="10116-ENSRNOP00000004070"/>
<dbReference type="Ensembl" id="ENSRNOT00000004070.7">
    <property type="protein sequence ID" value="ENSRNOP00000004070.4"/>
    <property type="gene ID" value="ENSRNOG00000003020.7"/>
</dbReference>
<dbReference type="GeneID" id="299316"/>
<dbReference type="KEGG" id="rno:299316"/>
<dbReference type="UCSC" id="RGD:1303247">
    <property type="organism name" value="rat"/>
</dbReference>
<dbReference type="AGR" id="RGD:1303247"/>
<dbReference type="CTD" id="283600"/>
<dbReference type="RGD" id="1303247">
    <property type="gene designation" value="Slc25a47"/>
</dbReference>
<dbReference type="eggNOG" id="KOG0762">
    <property type="taxonomic scope" value="Eukaryota"/>
</dbReference>
<dbReference type="GeneTree" id="ENSGT00940000159694"/>
<dbReference type="HOGENOM" id="CLU_015166_16_1_1"/>
<dbReference type="InParanoid" id="Q6J329"/>
<dbReference type="OrthoDB" id="78095at9989"/>
<dbReference type="PhylomeDB" id="Q6J329"/>
<dbReference type="TreeFam" id="TF351739"/>
<dbReference type="PRO" id="PR:Q6J329"/>
<dbReference type="Proteomes" id="UP000002494">
    <property type="component" value="Chromosome 6"/>
</dbReference>
<dbReference type="Bgee" id="ENSRNOG00000003020">
    <property type="expression patterns" value="Expressed in liver and 2 other cell types or tissues"/>
</dbReference>
<dbReference type="GO" id="GO:0005743">
    <property type="term" value="C:mitochondrial inner membrane"/>
    <property type="evidence" value="ECO:0000250"/>
    <property type="project" value="UniProtKB"/>
</dbReference>
<dbReference type="GO" id="GO:0005741">
    <property type="term" value="C:mitochondrial outer membrane"/>
    <property type="evidence" value="ECO:0000250"/>
    <property type="project" value="UniProtKB"/>
</dbReference>
<dbReference type="GO" id="GO:0005739">
    <property type="term" value="C:mitochondrion"/>
    <property type="evidence" value="ECO:0000318"/>
    <property type="project" value="GO_Central"/>
</dbReference>
<dbReference type="GO" id="GO:0008521">
    <property type="term" value="F:acetyl-CoA transmembrane transporter activity"/>
    <property type="evidence" value="ECO:0000250"/>
    <property type="project" value="UniProtKB"/>
</dbReference>
<dbReference type="GO" id="GO:0051724">
    <property type="term" value="F:NAD transmembrane transporter activity"/>
    <property type="evidence" value="ECO:0000250"/>
    <property type="project" value="UniProtKB"/>
</dbReference>
<dbReference type="GO" id="GO:0022857">
    <property type="term" value="F:transmembrane transporter activity"/>
    <property type="evidence" value="ECO:0000318"/>
    <property type="project" value="GO_Central"/>
</dbReference>
<dbReference type="FunFam" id="1.50.40.10:FF:000069">
    <property type="entry name" value="Solute carrier family 25 member 47"/>
    <property type="match status" value="1"/>
</dbReference>
<dbReference type="FunFam" id="1.50.40.10:FF:000072">
    <property type="entry name" value="solute carrier family 25 member 47"/>
    <property type="match status" value="1"/>
</dbReference>
<dbReference type="Gene3D" id="1.50.40.10">
    <property type="entry name" value="Mitochondrial carrier domain"/>
    <property type="match status" value="2"/>
</dbReference>
<dbReference type="InterPro" id="IPR002067">
    <property type="entry name" value="Mit_carrier"/>
</dbReference>
<dbReference type="InterPro" id="IPR050567">
    <property type="entry name" value="Mitochondrial_Carrier"/>
</dbReference>
<dbReference type="InterPro" id="IPR018108">
    <property type="entry name" value="Mitochondrial_sb/sol_carrier"/>
</dbReference>
<dbReference type="InterPro" id="IPR023395">
    <property type="entry name" value="Mt_carrier_dom_sf"/>
</dbReference>
<dbReference type="PANTHER" id="PTHR45624">
    <property type="entry name" value="MITOCHONDRIAL BASIC AMINO ACIDS TRANSPORTER-RELATED"/>
    <property type="match status" value="1"/>
</dbReference>
<dbReference type="PANTHER" id="PTHR45624:SF3">
    <property type="entry name" value="SOLUTE CARRIER FAMILY 25 MEMBER 47"/>
    <property type="match status" value="1"/>
</dbReference>
<dbReference type="Pfam" id="PF00153">
    <property type="entry name" value="Mito_carr"/>
    <property type="match status" value="3"/>
</dbReference>
<dbReference type="PRINTS" id="PR00926">
    <property type="entry name" value="MITOCARRIER"/>
</dbReference>
<dbReference type="SUPFAM" id="SSF103506">
    <property type="entry name" value="Mitochondrial carrier"/>
    <property type="match status" value="1"/>
</dbReference>
<dbReference type="PROSITE" id="PS50920">
    <property type="entry name" value="SOLCAR"/>
    <property type="match status" value="3"/>
</dbReference>